<name>PSBF_CHLMO</name>
<reference key="1">
    <citation type="journal article" date="1994" name="Curr. Genet.">
        <title>The chloroplast gene cluster containing psbF, psbL, petG and rps3 is conserved in Chlamydomonas.</title>
        <authorList>
            <person name="Turmel M."/>
            <person name="Otis C."/>
        </authorList>
    </citation>
    <scope>NUCLEOTIDE SEQUENCE [GENOMIC DNA]</scope>
</reference>
<comment type="function">
    <text evidence="1">This b-type cytochrome is tightly associated with the reaction center of photosystem II (PSII). PSII is a light-driven water:plastoquinone oxidoreductase that uses light energy to abstract electrons from H(2)O, generating O(2) and a proton gradient subsequently used for ATP formation. It consists of a core antenna complex that captures photons, and an electron transfer chain that converts photonic excitation into a charge separation.</text>
</comment>
<comment type="cofactor">
    <cofactor evidence="1">
        <name>heme b</name>
        <dbReference type="ChEBI" id="CHEBI:60344"/>
    </cofactor>
    <text evidence="1">With its partner (PsbE) binds heme. PSII binds additional chlorophylls, carotenoids and specific lipids.</text>
</comment>
<comment type="subunit">
    <text evidence="1">Heterodimer of an alpha subunit and a beta subunit. PSII is composed of 1 copy each of membrane proteins PsbA, PsbB, PsbC, PsbD, PsbE, PsbF, PsbH, PsbI, PsbJ, PsbK, PsbL, PsbM, PsbT, PsbX, PsbY, PsbZ, Psb30/Ycf12, at least 3 peripheral proteins of the oxygen-evolving complex and a large number of cofactors. It forms dimeric complexes.</text>
</comment>
<comment type="subcellular location">
    <subcellularLocation>
        <location evidence="1">Plastid</location>
        <location evidence="1">Chloroplast thylakoid membrane</location>
        <topology evidence="1">Single-pass membrane protein</topology>
    </subcellularLocation>
</comment>
<comment type="similarity">
    <text evidence="1">Belongs to the PsbE/PsbF family.</text>
</comment>
<organism>
    <name type="scientific">Chlamydomonas moewusii</name>
    <name type="common">Chlamydomonas eugametos</name>
    <dbReference type="NCBI Taxonomy" id="3054"/>
    <lineage>
        <taxon>Eukaryota</taxon>
        <taxon>Viridiplantae</taxon>
        <taxon>Chlorophyta</taxon>
        <taxon>core chlorophytes</taxon>
        <taxon>Chlorophyceae</taxon>
        <taxon>CS clade</taxon>
        <taxon>Chlamydomonadales</taxon>
        <taxon>Chlamydomonadaceae</taxon>
        <taxon>Chlamydomonas</taxon>
    </lineage>
</organism>
<gene>
    <name evidence="1" type="primary">psbF</name>
</gene>
<proteinExistence type="inferred from homology"/>
<keyword id="KW-0150">Chloroplast</keyword>
<keyword id="KW-0249">Electron transport</keyword>
<keyword id="KW-0349">Heme</keyword>
<keyword id="KW-0408">Iron</keyword>
<keyword id="KW-0472">Membrane</keyword>
<keyword id="KW-0479">Metal-binding</keyword>
<keyword id="KW-0602">Photosynthesis</keyword>
<keyword id="KW-0604">Photosystem II</keyword>
<keyword id="KW-0934">Plastid</keyword>
<keyword id="KW-0793">Thylakoid</keyword>
<keyword id="KW-0812">Transmembrane</keyword>
<keyword id="KW-1133">Transmembrane helix</keyword>
<keyword id="KW-0813">Transport</keyword>
<accession>P46305</accession>
<dbReference type="EMBL" id="L29282">
    <property type="protein sequence ID" value="AAA84156.1"/>
    <property type="molecule type" value="Genomic_DNA"/>
</dbReference>
<dbReference type="PIR" id="S51365">
    <property type="entry name" value="S51365"/>
</dbReference>
<dbReference type="SMR" id="P46305"/>
<dbReference type="GO" id="GO:0009535">
    <property type="term" value="C:chloroplast thylakoid membrane"/>
    <property type="evidence" value="ECO:0007669"/>
    <property type="project" value="UniProtKB-SubCell"/>
</dbReference>
<dbReference type="GO" id="GO:0009539">
    <property type="term" value="C:photosystem II reaction center"/>
    <property type="evidence" value="ECO:0007669"/>
    <property type="project" value="InterPro"/>
</dbReference>
<dbReference type="GO" id="GO:0009055">
    <property type="term" value="F:electron transfer activity"/>
    <property type="evidence" value="ECO:0007669"/>
    <property type="project" value="UniProtKB-UniRule"/>
</dbReference>
<dbReference type="GO" id="GO:0020037">
    <property type="term" value="F:heme binding"/>
    <property type="evidence" value="ECO:0007669"/>
    <property type="project" value="InterPro"/>
</dbReference>
<dbReference type="GO" id="GO:0005506">
    <property type="term" value="F:iron ion binding"/>
    <property type="evidence" value="ECO:0007669"/>
    <property type="project" value="UniProtKB-UniRule"/>
</dbReference>
<dbReference type="GO" id="GO:0009767">
    <property type="term" value="P:photosynthetic electron transport chain"/>
    <property type="evidence" value="ECO:0007669"/>
    <property type="project" value="InterPro"/>
</dbReference>
<dbReference type="HAMAP" id="MF_00643">
    <property type="entry name" value="PSII_PsbF"/>
    <property type="match status" value="1"/>
</dbReference>
<dbReference type="InterPro" id="IPR006241">
    <property type="entry name" value="PSII_cyt_b559_bsu"/>
</dbReference>
<dbReference type="InterPro" id="IPR006216">
    <property type="entry name" value="PSII_cyt_b559_CS"/>
</dbReference>
<dbReference type="InterPro" id="IPR013081">
    <property type="entry name" value="PSII_cyt_b559_N"/>
</dbReference>
<dbReference type="NCBIfam" id="TIGR01333">
    <property type="entry name" value="cyt_b559_beta"/>
    <property type="match status" value="1"/>
</dbReference>
<dbReference type="Pfam" id="PF00283">
    <property type="entry name" value="Cytochrom_B559"/>
    <property type="match status" value="1"/>
</dbReference>
<dbReference type="PIRSF" id="PIRSF000037">
    <property type="entry name" value="PsbF"/>
    <property type="match status" value="1"/>
</dbReference>
<dbReference type="SUPFAM" id="SSF161045">
    <property type="entry name" value="Cytochrome b559 subunits"/>
    <property type="match status" value="1"/>
</dbReference>
<dbReference type="PROSITE" id="PS00537">
    <property type="entry name" value="CYTOCHROME_B559"/>
    <property type="match status" value="1"/>
</dbReference>
<feature type="chain" id="PRO_0000200373" description="Cytochrome b559 subunit beta">
    <location>
        <begin position="1"/>
        <end position="44"/>
    </location>
</feature>
<feature type="transmembrane region" description="Helical" evidence="1">
    <location>
        <begin position="19"/>
        <end position="35"/>
    </location>
</feature>
<feature type="binding site" description="axial binding residue" evidence="1">
    <location>
        <position position="23"/>
    </location>
    <ligand>
        <name>heme</name>
        <dbReference type="ChEBI" id="CHEBI:30413"/>
        <note>ligand shared with alpha subunit</note>
    </ligand>
    <ligandPart>
        <name>Fe</name>
        <dbReference type="ChEBI" id="CHEBI:18248"/>
    </ligandPart>
</feature>
<geneLocation type="chloroplast"/>
<protein>
    <recommendedName>
        <fullName evidence="1">Cytochrome b559 subunit beta</fullName>
    </recommendedName>
    <alternativeName>
        <fullName evidence="1">PSII reaction center subunit VI</fullName>
    </alternativeName>
</protein>
<sequence length="44" mass="5043">MTTRKSAEVITYPIFTVRWVSIHALAVPTIFFLGSITAMQFIQR</sequence>
<evidence type="ECO:0000255" key="1">
    <source>
        <dbReference type="HAMAP-Rule" id="MF_00643"/>
    </source>
</evidence>